<geneLocation type="plasmid">
    <name>pRmeGR4b</name>
</geneLocation>
<keyword id="KW-0614">Plasmid</keyword>
<sequence>MRPSRPSSGKNDLFRDRLDAIINPRQALVRLAGVIPWARFDEAFGGFYRPVGRPANATRLMVGLHYLKHVHDLSDEEVVERWVENPYWQFFCGFEFFQHEAPIDASTMTPWRKRIGPQGLEELLKASVEAALQTGTARPESLERVNVDTTVQPKAIAHPTDSRLYLKALQMLVRHAKKHGIELRQSYTRLAKRAAVRARRYAHARQF</sequence>
<reference key="1">
    <citation type="journal article" date="1993" name="J. Mol. Biol.">
        <title>Nucleotide sequence and characterization of Rhizobium meliloti nodulation competitiveness genes nfe.</title>
        <authorList>
            <person name="Soto M.J."/>
            <person name="Zorzano A."/>
            <person name="Mercado-Blanco J."/>
            <person name="Lepek V."/>
            <person name="Olivares J."/>
            <person name="Toro N."/>
        </authorList>
    </citation>
    <scope>NUCLEOTIDE SEQUENCE [GENOMIC DNA]</scope>
    <source>
        <strain>GR4</strain>
    </source>
</reference>
<name>YNF8_RHIML</name>
<feature type="chain" id="PRO_0000160653" description="Uncharacterized protein ORF8 in nfe locus">
    <location>
        <begin position="1"/>
        <end position="207" status="greater than"/>
    </location>
</feature>
<feature type="non-terminal residue">
    <location>
        <position position="207"/>
    </location>
</feature>
<proteinExistence type="predicted"/>
<protein>
    <recommendedName>
        <fullName>Uncharacterized protein ORF8 in nfe locus</fullName>
    </recommendedName>
    <alternativeName>
        <fullName>ORFA</fullName>
    </alternativeName>
</protein>
<organism>
    <name type="scientific">Rhizobium meliloti</name>
    <name type="common">Ensifer meliloti</name>
    <name type="synonym">Sinorhizobium meliloti</name>
    <dbReference type="NCBI Taxonomy" id="382"/>
    <lineage>
        <taxon>Bacteria</taxon>
        <taxon>Pseudomonadati</taxon>
        <taxon>Pseudomonadota</taxon>
        <taxon>Alphaproteobacteria</taxon>
        <taxon>Hyphomicrobiales</taxon>
        <taxon>Rhizobiaceae</taxon>
        <taxon>Sinorhizobium/Ensifer group</taxon>
        <taxon>Sinorhizobium</taxon>
    </lineage>
</organism>
<dbReference type="EMBL" id="X66124">
    <property type="protein sequence ID" value="CAA46912.1"/>
    <property type="molecule type" value="Genomic_DNA"/>
</dbReference>
<dbReference type="PIR" id="S35086">
    <property type="entry name" value="S35086"/>
</dbReference>
<dbReference type="SMR" id="Q52991"/>
<dbReference type="InterPro" id="IPR047710">
    <property type="entry name" value="Transpos_IS5-like"/>
</dbReference>
<dbReference type="InterPro" id="IPR008490">
    <property type="entry name" value="Transposase_InsH_N"/>
</dbReference>
<dbReference type="NCBIfam" id="NF033578">
    <property type="entry name" value="transpos_IS5_1"/>
    <property type="match status" value="1"/>
</dbReference>
<dbReference type="PANTHER" id="PTHR33803:SF3">
    <property type="entry name" value="BLL1974 PROTEIN"/>
    <property type="match status" value="1"/>
</dbReference>
<dbReference type="PANTHER" id="PTHR33803">
    <property type="entry name" value="IS1478 TRANSPOSASE"/>
    <property type="match status" value="1"/>
</dbReference>
<dbReference type="Pfam" id="PF05598">
    <property type="entry name" value="DUF772"/>
    <property type="match status" value="1"/>
</dbReference>
<accession>Q52991</accession>